<sequence length="334" mass="37123">MIEADRLIQPQLQGQDDVVDRAMRPKLLDEYTGQDDTRAQLKVFIQAAKNRNEALDHMLIYGPPGLGKTTLAMIVANEMGVNIKSTSGPVLEKAGDLAALLTNLESGDVLFIDEIHRLSPVVEEILYPAMEDYQLDIMIGEGPAARSIKLDLPPFTLVGATTRAGALTSPLRARFGIPLRLEFYNIKDLSTIVTRSAQVMGLEIDTEGAFEIARRSRGTPRIANRLLRRVRDYAEVKHDGAITQFVADHALDLLDVDNEGFDYMDRKLMLAIIDKFMGGPVGLDNLAAAIGEERETIEDVLEPFLIQQGFIQRTPRGRIATARAYQHFQLIKPE</sequence>
<name>RUVB_SHEPC</name>
<reference key="1">
    <citation type="submission" date="2007-04" db="EMBL/GenBank/DDBJ databases">
        <title>Complete sequence of Shewanella putrefaciens CN-32.</title>
        <authorList>
            <consortium name="US DOE Joint Genome Institute"/>
            <person name="Copeland A."/>
            <person name="Lucas S."/>
            <person name="Lapidus A."/>
            <person name="Barry K."/>
            <person name="Detter J.C."/>
            <person name="Glavina del Rio T."/>
            <person name="Hammon N."/>
            <person name="Israni S."/>
            <person name="Dalin E."/>
            <person name="Tice H."/>
            <person name="Pitluck S."/>
            <person name="Chain P."/>
            <person name="Malfatti S."/>
            <person name="Shin M."/>
            <person name="Vergez L."/>
            <person name="Schmutz J."/>
            <person name="Larimer F."/>
            <person name="Land M."/>
            <person name="Hauser L."/>
            <person name="Kyrpides N."/>
            <person name="Mikhailova N."/>
            <person name="Romine M.F."/>
            <person name="Fredrickson J."/>
            <person name="Tiedje J."/>
            <person name="Richardson P."/>
        </authorList>
    </citation>
    <scope>NUCLEOTIDE SEQUENCE [LARGE SCALE GENOMIC DNA]</scope>
    <source>
        <strain>CN-32 / ATCC BAA-453</strain>
    </source>
</reference>
<comment type="function">
    <text evidence="1">The RuvA-RuvB-RuvC complex processes Holliday junction (HJ) DNA during genetic recombination and DNA repair, while the RuvA-RuvB complex plays an important role in the rescue of blocked DNA replication forks via replication fork reversal (RFR). RuvA specifically binds to HJ cruciform DNA, conferring on it an open structure. The RuvB hexamer acts as an ATP-dependent pump, pulling dsDNA into and through the RuvAB complex. RuvB forms 2 homohexamers on either side of HJ DNA bound by 1 or 2 RuvA tetramers; 4 subunits per hexamer contact DNA at a time. Coordinated motions by a converter formed by DNA-disengaged RuvB subunits stimulates ATP hydrolysis and nucleotide exchange. Immobilization of the converter enables RuvB to convert the ATP-contained energy into a lever motion, pulling 2 nucleotides of DNA out of the RuvA tetramer per ATP hydrolyzed, thus driving DNA branch migration. The RuvB motors rotate together with the DNA substrate, which together with the progressing nucleotide cycle form the mechanistic basis for DNA recombination by continuous HJ branch migration. Branch migration allows RuvC to scan DNA until it finds its consensus sequence, where it cleaves and resolves cruciform DNA.</text>
</comment>
<comment type="catalytic activity">
    <reaction evidence="1">
        <text>ATP + H2O = ADP + phosphate + H(+)</text>
        <dbReference type="Rhea" id="RHEA:13065"/>
        <dbReference type="ChEBI" id="CHEBI:15377"/>
        <dbReference type="ChEBI" id="CHEBI:15378"/>
        <dbReference type="ChEBI" id="CHEBI:30616"/>
        <dbReference type="ChEBI" id="CHEBI:43474"/>
        <dbReference type="ChEBI" id="CHEBI:456216"/>
    </reaction>
</comment>
<comment type="subunit">
    <text evidence="1">Homohexamer. Forms an RuvA(8)-RuvB(12)-Holliday junction (HJ) complex. HJ DNA is sandwiched between 2 RuvA tetramers; dsDNA enters through RuvA and exits via RuvB. An RuvB hexamer assembles on each DNA strand where it exits the tetramer. Each RuvB hexamer is contacted by two RuvA subunits (via domain III) on 2 adjacent RuvB subunits; this complex drives branch migration. In the full resolvosome a probable DNA-RuvA(4)-RuvB(12)-RuvC(2) complex forms which resolves the HJ.</text>
</comment>
<comment type="subcellular location">
    <subcellularLocation>
        <location evidence="1">Cytoplasm</location>
    </subcellularLocation>
</comment>
<comment type="domain">
    <text evidence="1">Has 3 domains, the large (RuvB-L) and small ATPase (RuvB-S) domains and the C-terminal head (RuvB-H) domain. The head domain binds DNA, while the ATPase domains jointly bind ATP, ADP or are empty depending on the state of the subunit in the translocation cycle. During a single DNA translocation step the structure of each domain remains the same, but their relative positions change.</text>
</comment>
<comment type="similarity">
    <text evidence="1">Belongs to the RuvB family.</text>
</comment>
<gene>
    <name evidence="1" type="primary">ruvB</name>
    <name type="ordered locus">Sputcn32_1939</name>
</gene>
<keyword id="KW-0067">ATP-binding</keyword>
<keyword id="KW-0963">Cytoplasm</keyword>
<keyword id="KW-0227">DNA damage</keyword>
<keyword id="KW-0233">DNA recombination</keyword>
<keyword id="KW-0234">DNA repair</keyword>
<keyword id="KW-0238">DNA-binding</keyword>
<keyword id="KW-0378">Hydrolase</keyword>
<keyword id="KW-0547">Nucleotide-binding</keyword>
<feature type="chain" id="PRO_1000001475" description="Holliday junction branch migration complex subunit RuvB">
    <location>
        <begin position="1"/>
        <end position="334"/>
    </location>
</feature>
<feature type="region of interest" description="Large ATPase domain (RuvB-L)" evidence="1">
    <location>
        <begin position="4"/>
        <end position="184"/>
    </location>
</feature>
<feature type="region of interest" description="Small ATPAse domain (RuvB-S)" evidence="1">
    <location>
        <begin position="185"/>
        <end position="255"/>
    </location>
</feature>
<feature type="region of interest" description="Head domain (RuvB-H)" evidence="1">
    <location>
        <begin position="258"/>
        <end position="334"/>
    </location>
</feature>
<feature type="binding site" evidence="1">
    <location>
        <position position="24"/>
    </location>
    <ligand>
        <name>ATP</name>
        <dbReference type="ChEBI" id="CHEBI:30616"/>
    </ligand>
</feature>
<feature type="binding site" evidence="1">
    <location>
        <position position="65"/>
    </location>
    <ligand>
        <name>ATP</name>
        <dbReference type="ChEBI" id="CHEBI:30616"/>
    </ligand>
</feature>
<feature type="binding site" evidence="1">
    <location>
        <position position="68"/>
    </location>
    <ligand>
        <name>ATP</name>
        <dbReference type="ChEBI" id="CHEBI:30616"/>
    </ligand>
</feature>
<feature type="binding site" evidence="1">
    <location>
        <position position="69"/>
    </location>
    <ligand>
        <name>ATP</name>
        <dbReference type="ChEBI" id="CHEBI:30616"/>
    </ligand>
</feature>
<feature type="binding site" evidence="1">
    <location>
        <position position="69"/>
    </location>
    <ligand>
        <name>Mg(2+)</name>
        <dbReference type="ChEBI" id="CHEBI:18420"/>
    </ligand>
</feature>
<feature type="binding site" evidence="1">
    <location>
        <position position="70"/>
    </location>
    <ligand>
        <name>ATP</name>
        <dbReference type="ChEBI" id="CHEBI:30616"/>
    </ligand>
</feature>
<feature type="binding site" evidence="1">
    <location>
        <begin position="131"/>
        <end position="133"/>
    </location>
    <ligand>
        <name>ATP</name>
        <dbReference type="ChEBI" id="CHEBI:30616"/>
    </ligand>
</feature>
<feature type="binding site" evidence="1">
    <location>
        <position position="174"/>
    </location>
    <ligand>
        <name>ATP</name>
        <dbReference type="ChEBI" id="CHEBI:30616"/>
    </ligand>
</feature>
<feature type="binding site" evidence="1">
    <location>
        <position position="184"/>
    </location>
    <ligand>
        <name>ATP</name>
        <dbReference type="ChEBI" id="CHEBI:30616"/>
    </ligand>
</feature>
<feature type="binding site" evidence="1">
    <location>
        <position position="221"/>
    </location>
    <ligand>
        <name>ATP</name>
        <dbReference type="ChEBI" id="CHEBI:30616"/>
    </ligand>
</feature>
<feature type="binding site" evidence="1">
    <location>
        <position position="294"/>
    </location>
    <ligand>
        <name>DNA</name>
        <dbReference type="ChEBI" id="CHEBI:16991"/>
    </ligand>
</feature>
<feature type="binding site" evidence="1">
    <location>
        <position position="313"/>
    </location>
    <ligand>
        <name>DNA</name>
        <dbReference type="ChEBI" id="CHEBI:16991"/>
    </ligand>
</feature>
<feature type="binding site" evidence="1">
    <location>
        <position position="318"/>
    </location>
    <ligand>
        <name>DNA</name>
        <dbReference type="ChEBI" id="CHEBI:16991"/>
    </ligand>
</feature>
<protein>
    <recommendedName>
        <fullName evidence="1">Holliday junction branch migration complex subunit RuvB</fullName>
        <ecNumber evidence="1">3.6.4.-</ecNumber>
    </recommendedName>
</protein>
<organism>
    <name type="scientific">Shewanella putrefaciens (strain CN-32 / ATCC BAA-453)</name>
    <dbReference type="NCBI Taxonomy" id="319224"/>
    <lineage>
        <taxon>Bacteria</taxon>
        <taxon>Pseudomonadati</taxon>
        <taxon>Pseudomonadota</taxon>
        <taxon>Gammaproteobacteria</taxon>
        <taxon>Alteromonadales</taxon>
        <taxon>Shewanellaceae</taxon>
        <taxon>Shewanella</taxon>
    </lineage>
</organism>
<accession>A4Y6S9</accession>
<evidence type="ECO:0000255" key="1">
    <source>
        <dbReference type="HAMAP-Rule" id="MF_00016"/>
    </source>
</evidence>
<proteinExistence type="inferred from homology"/>
<dbReference type="EC" id="3.6.4.-" evidence="1"/>
<dbReference type="EMBL" id="CP000681">
    <property type="protein sequence ID" value="ABP75662.1"/>
    <property type="molecule type" value="Genomic_DNA"/>
</dbReference>
<dbReference type="SMR" id="A4Y6S9"/>
<dbReference type="STRING" id="319224.Sputcn32_1939"/>
<dbReference type="KEGG" id="spc:Sputcn32_1939"/>
<dbReference type="eggNOG" id="COG2255">
    <property type="taxonomic scope" value="Bacteria"/>
</dbReference>
<dbReference type="HOGENOM" id="CLU_055599_1_0_6"/>
<dbReference type="GO" id="GO:0005737">
    <property type="term" value="C:cytoplasm"/>
    <property type="evidence" value="ECO:0007669"/>
    <property type="project" value="UniProtKB-SubCell"/>
</dbReference>
<dbReference type="GO" id="GO:0048476">
    <property type="term" value="C:Holliday junction resolvase complex"/>
    <property type="evidence" value="ECO:0007669"/>
    <property type="project" value="UniProtKB-UniRule"/>
</dbReference>
<dbReference type="GO" id="GO:0005524">
    <property type="term" value="F:ATP binding"/>
    <property type="evidence" value="ECO:0007669"/>
    <property type="project" value="UniProtKB-UniRule"/>
</dbReference>
<dbReference type="GO" id="GO:0016887">
    <property type="term" value="F:ATP hydrolysis activity"/>
    <property type="evidence" value="ECO:0007669"/>
    <property type="project" value="InterPro"/>
</dbReference>
<dbReference type="GO" id="GO:0000400">
    <property type="term" value="F:four-way junction DNA binding"/>
    <property type="evidence" value="ECO:0007669"/>
    <property type="project" value="UniProtKB-UniRule"/>
</dbReference>
<dbReference type="GO" id="GO:0009378">
    <property type="term" value="F:four-way junction helicase activity"/>
    <property type="evidence" value="ECO:0007669"/>
    <property type="project" value="InterPro"/>
</dbReference>
<dbReference type="GO" id="GO:0006310">
    <property type="term" value="P:DNA recombination"/>
    <property type="evidence" value="ECO:0007669"/>
    <property type="project" value="UniProtKB-UniRule"/>
</dbReference>
<dbReference type="GO" id="GO:0006281">
    <property type="term" value="P:DNA repair"/>
    <property type="evidence" value="ECO:0007669"/>
    <property type="project" value="UniProtKB-UniRule"/>
</dbReference>
<dbReference type="CDD" id="cd00009">
    <property type="entry name" value="AAA"/>
    <property type="match status" value="1"/>
</dbReference>
<dbReference type="FunFam" id="1.10.10.10:FF:000086">
    <property type="entry name" value="Holliday junction ATP-dependent DNA helicase RuvB"/>
    <property type="match status" value="1"/>
</dbReference>
<dbReference type="FunFam" id="1.10.8.60:FF:000023">
    <property type="entry name" value="Holliday junction ATP-dependent DNA helicase RuvB"/>
    <property type="match status" value="1"/>
</dbReference>
<dbReference type="FunFam" id="3.40.50.300:FF:000073">
    <property type="entry name" value="Holliday junction ATP-dependent DNA helicase RuvB"/>
    <property type="match status" value="1"/>
</dbReference>
<dbReference type="Gene3D" id="1.10.8.60">
    <property type="match status" value="1"/>
</dbReference>
<dbReference type="Gene3D" id="3.40.50.300">
    <property type="entry name" value="P-loop containing nucleotide triphosphate hydrolases"/>
    <property type="match status" value="1"/>
</dbReference>
<dbReference type="Gene3D" id="1.10.10.10">
    <property type="entry name" value="Winged helix-like DNA-binding domain superfamily/Winged helix DNA-binding domain"/>
    <property type="match status" value="1"/>
</dbReference>
<dbReference type="HAMAP" id="MF_00016">
    <property type="entry name" value="DNA_HJ_migration_RuvB"/>
    <property type="match status" value="1"/>
</dbReference>
<dbReference type="InterPro" id="IPR003593">
    <property type="entry name" value="AAA+_ATPase"/>
</dbReference>
<dbReference type="InterPro" id="IPR041445">
    <property type="entry name" value="AAA_lid_4"/>
</dbReference>
<dbReference type="InterPro" id="IPR004605">
    <property type="entry name" value="DNA_helicase_Holl-junc_RuvB"/>
</dbReference>
<dbReference type="InterPro" id="IPR027417">
    <property type="entry name" value="P-loop_NTPase"/>
</dbReference>
<dbReference type="InterPro" id="IPR008824">
    <property type="entry name" value="RuvB-like_N"/>
</dbReference>
<dbReference type="InterPro" id="IPR008823">
    <property type="entry name" value="RuvB_C"/>
</dbReference>
<dbReference type="InterPro" id="IPR036388">
    <property type="entry name" value="WH-like_DNA-bd_sf"/>
</dbReference>
<dbReference type="InterPro" id="IPR036390">
    <property type="entry name" value="WH_DNA-bd_sf"/>
</dbReference>
<dbReference type="NCBIfam" id="NF000868">
    <property type="entry name" value="PRK00080.1"/>
    <property type="match status" value="1"/>
</dbReference>
<dbReference type="NCBIfam" id="TIGR00635">
    <property type="entry name" value="ruvB"/>
    <property type="match status" value="1"/>
</dbReference>
<dbReference type="PANTHER" id="PTHR42848">
    <property type="match status" value="1"/>
</dbReference>
<dbReference type="PANTHER" id="PTHR42848:SF1">
    <property type="entry name" value="HOLLIDAY JUNCTION BRANCH MIGRATION COMPLEX SUBUNIT RUVB"/>
    <property type="match status" value="1"/>
</dbReference>
<dbReference type="Pfam" id="PF17864">
    <property type="entry name" value="AAA_lid_4"/>
    <property type="match status" value="1"/>
</dbReference>
<dbReference type="Pfam" id="PF05491">
    <property type="entry name" value="RuvB_C"/>
    <property type="match status" value="1"/>
</dbReference>
<dbReference type="Pfam" id="PF05496">
    <property type="entry name" value="RuvB_N"/>
    <property type="match status" value="1"/>
</dbReference>
<dbReference type="SMART" id="SM00382">
    <property type="entry name" value="AAA"/>
    <property type="match status" value="1"/>
</dbReference>
<dbReference type="SUPFAM" id="SSF52540">
    <property type="entry name" value="P-loop containing nucleoside triphosphate hydrolases"/>
    <property type="match status" value="1"/>
</dbReference>
<dbReference type="SUPFAM" id="SSF46785">
    <property type="entry name" value="Winged helix' DNA-binding domain"/>
    <property type="match status" value="1"/>
</dbReference>